<dbReference type="EC" id="2.7.7.6" evidence="1"/>
<dbReference type="EMBL" id="CP000240">
    <property type="protein sequence ID" value="ABD02544.1"/>
    <property type="molecule type" value="Genomic_DNA"/>
</dbReference>
<dbReference type="RefSeq" id="WP_011433190.1">
    <property type="nucleotide sequence ID" value="NC_007776.1"/>
</dbReference>
<dbReference type="SMR" id="Q2JL74"/>
<dbReference type="STRING" id="321332.CYB_1580"/>
<dbReference type="KEGG" id="cyb:CYB_1580"/>
<dbReference type="eggNOG" id="COG0202">
    <property type="taxonomic scope" value="Bacteria"/>
</dbReference>
<dbReference type="HOGENOM" id="CLU_053084_0_1_3"/>
<dbReference type="OrthoDB" id="9805706at2"/>
<dbReference type="Proteomes" id="UP000001938">
    <property type="component" value="Chromosome"/>
</dbReference>
<dbReference type="GO" id="GO:0005737">
    <property type="term" value="C:cytoplasm"/>
    <property type="evidence" value="ECO:0007669"/>
    <property type="project" value="UniProtKB-ARBA"/>
</dbReference>
<dbReference type="GO" id="GO:0000428">
    <property type="term" value="C:DNA-directed RNA polymerase complex"/>
    <property type="evidence" value="ECO:0007669"/>
    <property type="project" value="UniProtKB-KW"/>
</dbReference>
<dbReference type="GO" id="GO:0003677">
    <property type="term" value="F:DNA binding"/>
    <property type="evidence" value="ECO:0007669"/>
    <property type="project" value="UniProtKB-UniRule"/>
</dbReference>
<dbReference type="GO" id="GO:0003899">
    <property type="term" value="F:DNA-directed RNA polymerase activity"/>
    <property type="evidence" value="ECO:0007669"/>
    <property type="project" value="UniProtKB-UniRule"/>
</dbReference>
<dbReference type="GO" id="GO:0046983">
    <property type="term" value="F:protein dimerization activity"/>
    <property type="evidence" value="ECO:0007669"/>
    <property type="project" value="InterPro"/>
</dbReference>
<dbReference type="GO" id="GO:0006351">
    <property type="term" value="P:DNA-templated transcription"/>
    <property type="evidence" value="ECO:0007669"/>
    <property type="project" value="UniProtKB-UniRule"/>
</dbReference>
<dbReference type="CDD" id="cd06928">
    <property type="entry name" value="RNAP_alpha_NTD"/>
    <property type="match status" value="1"/>
</dbReference>
<dbReference type="FunFam" id="2.170.120.12:FF:000001">
    <property type="entry name" value="DNA-directed RNA polymerase subunit alpha"/>
    <property type="match status" value="1"/>
</dbReference>
<dbReference type="Gene3D" id="1.10.150.20">
    <property type="entry name" value="5' to 3' exonuclease, C-terminal subdomain"/>
    <property type="match status" value="1"/>
</dbReference>
<dbReference type="Gene3D" id="2.170.120.12">
    <property type="entry name" value="DNA-directed RNA polymerase, insert domain"/>
    <property type="match status" value="1"/>
</dbReference>
<dbReference type="Gene3D" id="3.30.1360.10">
    <property type="entry name" value="RNA polymerase, RBP11-like subunit"/>
    <property type="match status" value="1"/>
</dbReference>
<dbReference type="HAMAP" id="MF_00059">
    <property type="entry name" value="RNApol_bact_RpoA"/>
    <property type="match status" value="1"/>
</dbReference>
<dbReference type="InterPro" id="IPR011262">
    <property type="entry name" value="DNA-dir_RNA_pol_insert"/>
</dbReference>
<dbReference type="InterPro" id="IPR011263">
    <property type="entry name" value="DNA-dir_RNA_pol_RpoA/D/Rpb3"/>
</dbReference>
<dbReference type="InterPro" id="IPR011773">
    <property type="entry name" value="DNA-dir_RpoA"/>
</dbReference>
<dbReference type="InterPro" id="IPR036603">
    <property type="entry name" value="RBP11-like"/>
</dbReference>
<dbReference type="InterPro" id="IPR011260">
    <property type="entry name" value="RNAP_asu_C"/>
</dbReference>
<dbReference type="InterPro" id="IPR036643">
    <property type="entry name" value="RNApol_insert_sf"/>
</dbReference>
<dbReference type="NCBIfam" id="NF003513">
    <property type="entry name" value="PRK05182.1-2"/>
    <property type="match status" value="1"/>
</dbReference>
<dbReference type="NCBIfam" id="NF003516">
    <property type="entry name" value="PRK05182.2-2"/>
    <property type="match status" value="1"/>
</dbReference>
<dbReference type="NCBIfam" id="NF003519">
    <property type="entry name" value="PRK05182.2-5"/>
    <property type="match status" value="1"/>
</dbReference>
<dbReference type="NCBIfam" id="TIGR02027">
    <property type="entry name" value="rpoA"/>
    <property type="match status" value="1"/>
</dbReference>
<dbReference type="Pfam" id="PF01000">
    <property type="entry name" value="RNA_pol_A_bac"/>
    <property type="match status" value="1"/>
</dbReference>
<dbReference type="Pfam" id="PF03118">
    <property type="entry name" value="RNA_pol_A_CTD"/>
    <property type="match status" value="1"/>
</dbReference>
<dbReference type="Pfam" id="PF01193">
    <property type="entry name" value="RNA_pol_L"/>
    <property type="match status" value="1"/>
</dbReference>
<dbReference type="SMART" id="SM00662">
    <property type="entry name" value="RPOLD"/>
    <property type="match status" value="1"/>
</dbReference>
<dbReference type="SUPFAM" id="SSF47789">
    <property type="entry name" value="C-terminal domain of RNA polymerase alpha subunit"/>
    <property type="match status" value="1"/>
</dbReference>
<dbReference type="SUPFAM" id="SSF56553">
    <property type="entry name" value="Insert subdomain of RNA polymerase alpha subunit"/>
    <property type="match status" value="1"/>
</dbReference>
<dbReference type="SUPFAM" id="SSF55257">
    <property type="entry name" value="RBP11-like subunits of RNA polymerase"/>
    <property type="match status" value="1"/>
</dbReference>
<comment type="function">
    <text evidence="1">DNA-dependent RNA polymerase catalyzes the transcription of DNA into RNA using the four ribonucleoside triphosphates as substrates.</text>
</comment>
<comment type="catalytic activity">
    <reaction evidence="1">
        <text>RNA(n) + a ribonucleoside 5'-triphosphate = RNA(n+1) + diphosphate</text>
        <dbReference type="Rhea" id="RHEA:21248"/>
        <dbReference type="Rhea" id="RHEA-COMP:14527"/>
        <dbReference type="Rhea" id="RHEA-COMP:17342"/>
        <dbReference type="ChEBI" id="CHEBI:33019"/>
        <dbReference type="ChEBI" id="CHEBI:61557"/>
        <dbReference type="ChEBI" id="CHEBI:140395"/>
        <dbReference type="EC" id="2.7.7.6"/>
    </reaction>
</comment>
<comment type="subunit">
    <text evidence="1">In cyanobacteria the RNAP catalytic core is composed of 2 alpha, 1 beta, 1 beta', 1 gamma and 1 omega subunit. When a sigma factor is associated with the core the holoenzyme is formed, which can initiate transcription.</text>
</comment>
<comment type="domain">
    <text evidence="1">The N-terminal domain is essential for RNAP assembly and basal transcription, whereas the C-terminal domain is involved in interaction with transcriptional regulators and with upstream promoter elements.</text>
</comment>
<comment type="similarity">
    <text evidence="1">Belongs to the RNA polymerase alpha chain family.</text>
</comment>
<feature type="chain" id="PRO_0000264560" description="DNA-directed RNA polymerase subunit alpha">
    <location>
        <begin position="1"/>
        <end position="335"/>
    </location>
</feature>
<feature type="region of interest" description="Alpha N-terminal domain (alpha-NTD)" evidence="1">
    <location>
        <begin position="1"/>
        <end position="248"/>
    </location>
</feature>
<feature type="region of interest" description="Alpha C-terminal domain (alpha-CTD)" evidence="1">
    <location>
        <begin position="256"/>
        <end position="335"/>
    </location>
</feature>
<evidence type="ECO:0000255" key="1">
    <source>
        <dbReference type="HAMAP-Rule" id="MF_00059"/>
    </source>
</evidence>
<keyword id="KW-0240">DNA-directed RNA polymerase</keyword>
<keyword id="KW-0548">Nucleotidyltransferase</keyword>
<keyword id="KW-1185">Reference proteome</keyword>
<keyword id="KW-0804">Transcription</keyword>
<keyword id="KW-0808">Transferase</keyword>
<name>RPOA_SYNJB</name>
<proteinExistence type="inferred from homology"/>
<sequence>MTIQTSRTLSHSLGSRASSSAVAYQTECVESHRDDNGVHYGKFALGPLERGQGITVGNALRRVLLSNLEGTAVTAVRIAGVTHEFSTVPGVREDVMEILLNMKELVLRSSSPETQVGRLVAQGPGEVTAEKLQLPSDVEVINPRHHIATLAEGAILEMEFMIGRGHGYRAVDYSDSKAMAIDFLQIDSVFMPVRKVNYAVEAARVGQFLEKDRLVLEIWTNGSLTPQEALSQAARILVGLFAPLQEVSFDAPVPPKPDEDNQKNQIPIEELQLSVRAYNCLKRAQINTVADLLLYTEEDLLEIKNFGQKSAEEVVQALKARFGLTLPRTREKGKA</sequence>
<protein>
    <recommendedName>
        <fullName evidence="1">DNA-directed RNA polymerase subunit alpha</fullName>
        <shortName evidence="1">RNAP subunit alpha</shortName>
        <ecNumber evidence="1">2.7.7.6</ecNumber>
    </recommendedName>
    <alternativeName>
        <fullName evidence="1">RNA polymerase subunit alpha</fullName>
    </alternativeName>
    <alternativeName>
        <fullName evidence="1">Transcriptase subunit alpha</fullName>
    </alternativeName>
</protein>
<gene>
    <name evidence="1" type="primary">rpoA</name>
    <name type="ordered locus">CYB_1580</name>
</gene>
<organism>
    <name type="scientific">Synechococcus sp. (strain JA-2-3B'a(2-13))</name>
    <name type="common">Cyanobacteria bacterium Yellowstone B-Prime</name>
    <dbReference type="NCBI Taxonomy" id="321332"/>
    <lineage>
        <taxon>Bacteria</taxon>
        <taxon>Bacillati</taxon>
        <taxon>Cyanobacteriota</taxon>
        <taxon>Cyanophyceae</taxon>
        <taxon>Synechococcales</taxon>
        <taxon>Synechococcaceae</taxon>
        <taxon>Synechococcus</taxon>
    </lineage>
</organism>
<accession>Q2JL74</accession>
<reference key="1">
    <citation type="journal article" date="2007" name="ISME J.">
        <title>Population level functional diversity in a microbial community revealed by comparative genomic and metagenomic analyses.</title>
        <authorList>
            <person name="Bhaya D."/>
            <person name="Grossman A.R."/>
            <person name="Steunou A.-S."/>
            <person name="Khuri N."/>
            <person name="Cohan F.M."/>
            <person name="Hamamura N."/>
            <person name="Melendrez M.C."/>
            <person name="Bateson M.M."/>
            <person name="Ward D.M."/>
            <person name="Heidelberg J.F."/>
        </authorList>
    </citation>
    <scope>NUCLEOTIDE SEQUENCE [LARGE SCALE GENOMIC DNA]</scope>
    <source>
        <strain>JA-2-3B'a(2-13)</strain>
    </source>
</reference>